<accession>Q9HK34</accession>
<name>NADM_THEAC</name>
<organism>
    <name type="scientific">Thermoplasma acidophilum (strain ATCC 25905 / DSM 1728 / JCM 9062 / NBRC 15155 / AMRC-C165)</name>
    <dbReference type="NCBI Taxonomy" id="273075"/>
    <lineage>
        <taxon>Archaea</taxon>
        <taxon>Methanobacteriati</taxon>
        <taxon>Thermoplasmatota</taxon>
        <taxon>Thermoplasmata</taxon>
        <taxon>Thermoplasmatales</taxon>
        <taxon>Thermoplasmataceae</taxon>
        <taxon>Thermoplasma</taxon>
    </lineage>
</organism>
<gene>
    <name type="ordered locus">Ta0774</name>
</gene>
<sequence>MESRKEKRAFLIGRFQPFHKGHLEIVKRILSENDSIIIGIGSAQYSHTVVNPFTAGERHLMISRTLEKERIYNYYLVPIEDVNANSLWVSHVEALTPKFDIVYTNNPLVRRLFMERKYEVRSLPMVNRKEWTGTKIREKMIAGEPWENDVPDPVVEVIHEIDGISRIRQLSTTDEDITQ</sequence>
<proteinExistence type="inferred from homology"/>
<feature type="chain" id="PRO_0000135007" description="Nicotinamide-nucleotide adenylyltransferase">
    <location>
        <begin position="1"/>
        <end position="179"/>
    </location>
</feature>
<dbReference type="EC" id="2.7.7.1" evidence="1"/>
<dbReference type="EMBL" id="AL445065">
    <property type="protein sequence ID" value="CAC11905.1"/>
    <property type="status" value="ALT_INIT"/>
    <property type="molecule type" value="Genomic_DNA"/>
</dbReference>
<dbReference type="RefSeq" id="WP_048162318.1">
    <property type="nucleotide sequence ID" value="NC_002578.1"/>
</dbReference>
<dbReference type="SMR" id="Q9HK34"/>
<dbReference type="FunCoup" id="Q9HK34">
    <property type="interactions" value="3"/>
</dbReference>
<dbReference type="STRING" id="273075.gene:9571987"/>
<dbReference type="PaxDb" id="273075-Ta0774"/>
<dbReference type="EnsemblBacteria" id="CAC11905">
    <property type="protein sequence ID" value="CAC11905"/>
    <property type="gene ID" value="CAC11905"/>
</dbReference>
<dbReference type="KEGG" id="tac:Ta0774"/>
<dbReference type="eggNOG" id="arCOG00972">
    <property type="taxonomic scope" value="Archaea"/>
</dbReference>
<dbReference type="HOGENOM" id="CLU_108783_0_0_2"/>
<dbReference type="InParanoid" id="Q9HK34"/>
<dbReference type="OrthoDB" id="264480at2157"/>
<dbReference type="UniPathway" id="UPA00253">
    <property type="reaction ID" value="UER00600"/>
</dbReference>
<dbReference type="Proteomes" id="UP000001024">
    <property type="component" value="Chromosome"/>
</dbReference>
<dbReference type="GO" id="GO:0005737">
    <property type="term" value="C:cytoplasm"/>
    <property type="evidence" value="ECO:0007669"/>
    <property type="project" value="UniProtKB-SubCell"/>
</dbReference>
<dbReference type="GO" id="GO:0005524">
    <property type="term" value="F:ATP binding"/>
    <property type="evidence" value="ECO:0007669"/>
    <property type="project" value="UniProtKB-KW"/>
</dbReference>
<dbReference type="GO" id="GO:0000309">
    <property type="term" value="F:nicotinamide-nucleotide adenylyltransferase activity"/>
    <property type="evidence" value="ECO:0007669"/>
    <property type="project" value="UniProtKB-UniRule"/>
</dbReference>
<dbReference type="GO" id="GO:0009435">
    <property type="term" value="P:NAD biosynthetic process"/>
    <property type="evidence" value="ECO:0007669"/>
    <property type="project" value="UniProtKB-UniRule"/>
</dbReference>
<dbReference type="CDD" id="cd02166">
    <property type="entry name" value="NMNAT_Archaea"/>
    <property type="match status" value="1"/>
</dbReference>
<dbReference type="Gene3D" id="3.40.50.620">
    <property type="entry name" value="HUPs"/>
    <property type="match status" value="1"/>
</dbReference>
<dbReference type="HAMAP" id="MF_00243">
    <property type="entry name" value="NMN_adenylyltr"/>
    <property type="match status" value="1"/>
</dbReference>
<dbReference type="InterPro" id="IPR004821">
    <property type="entry name" value="Cyt_trans-like"/>
</dbReference>
<dbReference type="InterPro" id="IPR006418">
    <property type="entry name" value="NMN_Atrans_arc"/>
</dbReference>
<dbReference type="InterPro" id="IPR014729">
    <property type="entry name" value="Rossmann-like_a/b/a_fold"/>
</dbReference>
<dbReference type="NCBIfam" id="TIGR01527">
    <property type="entry name" value="arch_NMN_Atrans"/>
    <property type="match status" value="1"/>
</dbReference>
<dbReference type="NCBIfam" id="TIGR00125">
    <property type="entry name" value="cyt_tran_rel"/>
    <property type="match status" value="1"/>
</dbReference>
<dbReference type="NCBIfam" id="NF002243">
    <property type="entry name" value="PRK01153.1"/>
    <property type="match status" value="1"/>
</dbReference>
<dbReference type="PANTHER" id="PTHR21342:SF0">
    <property type="entry name" value="BIFUNCTIONAL NMN ADENYLYLTRANSFERASE_NUDIX HYDROLASE"/>
    <property type="match status" value="1"/>
</dbReference>
<dbReference type="PANTHER" id="PTHR21342">
    <property type="entry name" value="PHOSPHOPANTETHEINE ADENYLYLTRANSFERASE"/>
    <property type="match status" value="1"/>
</dbReference>
<dbReference type="Pfam" id="PF01467">
    <property type="entry name" value="CTP_transf_like"/>
    <property type="match status" value="1"/>
</dbReference>
<dbReference type="SUPFAM" id="SSF52374">
    <property type="entry name" value="Nucleotidylyl transferase"/>
    <property type="match status" value="1"/>
</dbReference>
<protein>
    <recommendedName>
        <fullName evidence="1">Nicotinamide-nucleotide adenylyltransferase</fullName>
        <ecNumber evidence="1">2.7.7.1</ecNumber>
    </recommendedName>
    <alternativeName>
        <fullName evidence="1">NAD(+) diphosphorylase</fullName>
    </alternativeName>
    <alternativeName>
        <fullName evidence="1">NAD(+) pyrophosphorylase</fullName>
    </alternativeName>
    <alternativeName>
        <fullName evidence="1">NMN adenylyltransferase</fullName>
    </alternativeName>
</protein>
<keyword id="KW-0067">ATP-binding</keyword>
<keyword id="KW-0963">Cytoplasm</keyword>
<keyword id="KW-0520">NAD</keyword>
<keyword id="KW-0547">Nucleotide-binding</keyword>
<keyword id="KW-0548">Nucleotidyltransferase</keyword>
<keyword id="KW-0662">Pyridine nucleotide biosynthesis</keyword>
<keyword id="KW-1185">Reference proteome</keyword>
<keyword id="KW-0808">Transferase</keyword>
<reference key="1">
    <citation type="journal article" date="2000" name="Nature">
        <title>The genome sequence of the thermoacidophilic scavenger Thermoplasma acidophilum.</title>
        <authorList>
            <person name="Ruepp A."/>
            <person name="Graml W."/>
            <person name="Santos-Martinez M.-L."/>
            <person name="Koretke K.K."/>
            <person name="Volker C."/>
            <person name="Mewes H.-W."/>
            <person name="Frishman D."/>
            <person name="Stocker S."/>
            <person name="Lupas A.N."/>
            <person name="Baumeister W."/>
        </authorList>
    </citation>
    <scope>NUCLEOTIDE SEQUENCE [LARGE SCALE GENOMIC DNA]</scope>
    <source>
        <strain>ATCC 25905 / DSM 1728 / JCM 9062 / NBRC 15155 / AMRC-C165</strain>
    </source>
</reference>
<comment type="catalytic activity">
    <reaction evidence="1">
        <text>beta-nicotinamide D-ribonucleotide + ATP + H(+) = diphosphate + NAD(+)</text>
        <dbReference type="Rhea" id="RHEA:21360"/>
        <dbReference type="ChEBI" id="CHEBI:14649"/>
        <dbReference type="ChEBI" id="CHEBI:15378"/>
        <dbReference type="ChEBI" id="CHEBI:30616"/>
        <dbReference type="ChEBI" id="CHEBI:33019"/>
        <dbReference type="ChEBI" id="CHEBI:57540"/>
        <dbReference type="EC" id="2.7.7.1"/>
    </reaction>
</comment>
<comment type="pathway">
    <text evidence="1">Cofactor biosynthesis; NAD(+) biosynthesis; NAD(+) from nicotinamide D-ribonucleotide: step 1/1.</text>
</comment>
<comment type="subcellular location">
    <subcellularLocation>
        <location evidence="1">Cytoplasm</location>
    </subcellularLocation>
</comment>
<comment type="similarity">
    <text evidence="1">Belongs to the archaeal NMN adenylyltransferase family.</text>
</comment>
<comment type="sequence caution" evidence="2">
    <conflict type="erroneous initiation">
        <sequence resource="EMBL-CDS" id="CAC11905"/>
    </conflict>
</comment>
<evidence type="ECO:0000255" key="1">
    <source>
        <dbReference type="HAMAP-Rule" id="MF_00243"/>
    </source>
</evidence>
<evidence type="ECO:0000305" key="2"/>